<accession>P9WI98</accession>
<accession>F2GJM6</accession>
<accession>L0TES4</accession>
<accession>O53318</accession>
<accession>Q7D606</accession>
<proteinExistence type="inferred from homology"/>
<sequence>MANEPAIGAIDRLQRSSRDVTTLPAVISRWLSSVLPGGAAPEVTVESGVDSTGMSSETIILTARWQQDGRSIQQKLVARVAPAAEDVPVFPTYRLDHQFEVIRLVGELTDVPVPRVRWIETTGDVLGTPFFLMDYVEGVVPPDVMPYTFGDNWFADAPAERQRQLQDATVAALATLHSIPNAQNTFSFLTQGRTSDTTLHRHFNWVRSWYDFAVEGIGRSPLLERTFEWLQSHWPDDAAAREPVLLWGDARVGNVLYRDFQPVAVLDWEMVALGPRELDVAWMIFAHRVFQELAGLATLPGLPEVMREDDVRATYQALTGVELGDLHWFYVYSGVMWACVFMRTGARRVHFGEIEKPDDVESLFYHAGLMKHLLGEEH</sequence>
<name>Y3168_MYCTO</name>
<organism>
    <name type="scientific">Mycobacterium tuberculosis (strain CDC 1551 / Oshkosh)</name>
    <dbReference type="NCBI Taxonomy" id="83331"/>
    <lineage>
        <taxon>Bacteria</taxon>
        <taxon>Bacillati</taxon>
        <taxon>Actinomycetota</taxon>
        <taxon>Actinomycetes</taxon>
        <taxon>Mycobacteriales</taxon>
        <taxon>Mycobacteriaceae</taxon>
        <taxon>Mycobacterium</taxon>
        <taxon>Mycobacterium tuberculosis complex</taxon>
    </lineage>
</organism>
<comment type="function">
    <text evidence="1">Might catalyze the phosphorylation of aminoglycosides and confer aminoglycoside antibiotics resistance.</text>
</comment>
<comment type="similarity">
    <text evidence="2">Belongs to the aminoglycoside phosphotransferase family.</text>
</comment>
<feature type="chain" id="PRO_0000428044" description="Putative aminoglycoside phosphotransferase">
    <location>
        <begin position="1"/>
        <end position="378"/>
    </location>
</feature>
<feature type="active site" description="Proton acceptor" evidence="2">
    <location>
        <position position="249"/>
    </location>
</feature>
<feature type="binding site">
    <location>
        <position position="79"/>
    </location>
    <ligand>
        <name>ATP</name>
        <dbReference type="ChEBI" id="CHEBI:30616"/>
    </ligand>
</feature>
<feature type="binding site">
    <location>
        <begin position="134"/>
        <end position="136"/>
    </location>
    <ligand>
        <name>ATP</name>
        <dbReference type="ChEBI" id="CHEBI:30616"/>
    </ligand>
</feature>
<feature type="binding site">
    <location>
        <position position="254"/>
    </location>
    <ligand>
        <name>Mg(2+)</name>
        <dbReference type="ChEBI" id="CHEBI:18420"/>
        <label>1</label>
    </ligand>
</feature>
<feature type="binding site">
    <location>
        <position position="267"/>
    </location>
    <ligand>
        <name>Mg(2+)</name>
        <dbReference type="ChEBI" id="CHEBI:18420"/>
        <label>1</label>
    </ligand>
</feature>
<feature type="binding site">
    <location>
        <position position="267"/>
    </location>
    <ligand>
        <name>Mg(2+)</name>
        <dbReference type="ChEBI" id="CHEBI:18420"/>
        <label>2</label>
    </ligand>
</feature>
<feature type="binding site">
    <location>
        <position position="269"/>
    </location>
    <ligand>
        <name>Mg(2+)</name>
        <dbReference type="ChEBI" id="CHEBI:18420"/>
        <label>2</label>
    </ligand>
</feature>
<gene>
    <name type="ordered locus">MT3257</name>
</gene>
<reference key="1">
    <citation type="journal article" date="2002" name="J. Bacteriol.">
        <title>Whole-genome comparison of Mycobacterium tuberculosis clinical and laboratory strains.</title>
        <authorList>
            <person name="Fleischmann R.D."/>
            <person name="Alland D."/>
            <person name="Eisen J.A."/>
            <person name="Carpenter L."/>
            <person name="White O."/>
            <person name="Peterson J.D."/>
            <person name="DeBoy R.T."/>
            <person name="Dodson R.J."/>
            <person name="Gwinn M.L."/>
            <person name="Haft D.H."/>
            <person name="Hickey E.K."/>
            <person name="Kolonay J.F."/>
            <person name="Nelson W.C."/>
            <person name="Umayam L.A."/>
            <person name="Ermolaeva M.D."/>
            <person name="Salzberg S.L."/>
            <person name="Delcher A."/>
            <person name="Utterback T.R."/>
            <person name="Weidman J.F."/>
            <person name="Khouri H.M."/>
            <person name="Gill J."/>
            <person name="Mikula A."/>
            <person name="Bishai W."/>
            <person name="Jacobs W.R. Jr."/>
            <person name="Venter J.C."/>
            <person name="Fraser C.M."/>
        </authorList>
    </citation>
    <scope>NUCLEOTIDE SEQUENCE [LARGE SCALE GENOMIC DNA]</scope>
    <source>
        <strain>CDC 1551 / Oshkosh</strain>
    </source>
</reference>
<protein>
    <recommendedName>
        <fullName>Putative aminoglycoside phosphotransferase</fullName>
        <ecNumber>2.7.1.-</ecNumber>
    </recommendedName>
    <alternativeName>
        <fullName>Putative aminoglycoside antibiotics resistance enzyme</fullName>
    </alternativeName>
</protein>
<keyword id="KW-0046">Antibiotic resistance</keyword>
<keyword id="KW-0067">ATP-binding</keyword>
<keyword id="KW-0418">Kinase</keyword>
<keyword id="KW-0460">Magnesium</keyword>
<keyword id="KW-0479">Metal-binding</keyword>
<keyword id="KW-0547">Nucleotide-binding</keyword>
<keyword id="KW-1185">Reference proteome</keyword>
<keyword id="KW-0808">Transferase</keyword>
<evidence type="ECO:0000250" key="1"/>
<evidence type="ECO:0000305" key="2"/>
<dbReference type="EC" id="2.7.1.-"/>
<dbReference type="EMBL" id="AE000516">
    <property type="protein sequence ID" value="AAK47596.1"/>
    <property type="molecule type" value="Genomic_DNA"/>
</dbReference>
<dbReference type="PIR" id="F70947">
    <property type="entry name" value="F70947"/>
</dbReference>
<dbReference type="RefSeq" id="WP_003900650.1">
    <property type="nucleotide sequence ID" value="NZ_KK341227.1"/>
</dbReference>
<dbReference type="SMR" id="P9WI98"/>
<dbReference type="KEGG" id="mtc:MT3257"/>
<dbReference type="PATRIC" id="fig|83331.31.peg.3506"/>
<dbReference type="HOGENOM" id="CLU_007526_1_2_11"/>
<dbReference type="Proteomes" id="UP000001020">
    <property type="component" value="Chromosome"/>
</dbReference>
<dbReference type="GO" id="GO:0005524">
    <property type="term" value="F:ATP binding"/>
    <property type="evidence" value="ECO:0007669"/>
    <property type="project" value="UniProtKB-KW"/>
</dbReference>
<dbReference type="GO" id="GO:0016301">
    <property type="term" value="F:kinase activity"/>
    <property type="evidence" value="ECO:0007669"/>
    <property type="project" value="UniProtKB-KW"/>
</dbReference>
<dbReference type="GO" id="GO:0046872">
    <property type="term" value="F:metal ion binding"/>
    <property type="evidence" value="ECO:0007669"/>
    <property type="project" value="UniProtKB-KW"/>
</dbReference>
<dbReference type="GO" id="GO:0046677">
    <property type="term" value="P:response to antibiotic"/>
    <property type="evidence" value="ECO:0007669"/>
    <property type="project" value="UniProtKB-KW"/>
</dbReference>
<dbReference type="CDD" id="cd05154">
    <property type="entry name" value="ACAD10_11_N-like"/>
    <property type="match status" value="1"/>
</dbReference>
<dbReference type="Gene3D" id="3.90.1200.10">
    <property type="match status" value="1"/>
</dbReference>
<dbReference type="Gene3D" id="3.30.200.20">
    <property type="entry name" value="Phosphorylase Kinase, domain 1"/>
    <property type="match status" value="1"/>
</dbReference>
<dbReference type="InterPro" id="IPR041726">
    <property type="entry name" value="ACAD10_11_N"/>
</dbReference>
<dbReference type="InterPro" id="IPR051678">
    <property type="entry name" value="AGP_Transferase"/>
</dbReference>
<dbReference type="InterPro" id="IPR002575">
    <property type="entry name" value="Aminoglycoside_PTrfase"/>
</dbReference>
<dbReference type="InterPro" id="IPR011009">
    <property type="entry name" value="Kinase-like_dom_sf"/>
</dbReference>
<dbReference type="PANTHER" id="PTHR21310:SF40">
    <property type="entry name" value="AMINOGLYCOSIDE PHOSPHOTRANSFERASE DOMAIN-CONTAINING PROTEIN-RELATED"/>
    <property type="match status" value="1"/>
</dbReference>
<dbReference type="PANTHER" id="PTHR21310">
    <property type="entry name" value="AMINOGLYCOSIDE PHOSPHOTRANSFERASE-RELATED-RELATED"/>
    <property type="match status" value="1"/>
</dbReference>
<dbReference type="Pfam" id="PF01636">
    <property type="entry name" value="APH"/>
    <property type="match status" value="1"/>
</dbReference>
<dbReference type="SUPFAM" id="SSF56112">
    <property type="entry name" value="Protein kinase-like (PK-like)"/>
    <property type="match status" value="1"/>
</dbReference>